<accession>P61038</accession>
<proteinExistence type="inferred from homology"/>
<dbReference type="EC" id="2.3.1.269" evidence="1"/>
<dbReference type="EMBL" id="AE017226">
    <property type="protein sequence ID" value="AAS12818.1"/>
    <property type="molecule type" value="Genomic_DNA"/>
</dbReference>
<dbReference type="RefSeq" id="NP_972899.1">
    <property type="nucleotide sequence ID" value="NC_002967.9"/>
</dbReference>
<dbReference type="SMR" id="P61038"/>
<dbReference type="STRING" id="243275.TDE_2299"/>
<dbReference type="PaxDb" id="243275-TDE_2299"/>
<dbReference type="GeneID" id="2740264"/>
<dbReference type="KEGG" id="tde:TDE_2299"/>
<dbReference type="PATRIC" id="fig|243275.7.peg.2169"/>
<dbReference type="eggNOG" id="COG0815">
    <property type="taxonomic scope" value="Bacteria"/>
</dbReference>
<dbReference type="HOGENOM" id="CLU_019563_1_1_12"/>
<dbReference type="OrthoDB" id="9811121at2"/>
<dbReference type="UniPathway" id="UPA00666"/>
<dbReference type="Proteomes" id="UP000008212">
    <property type="component" value="Chromosome"/>
</dbReference>
<dbReference type="GO" id="GO:0005886">
    <property type="term" value="C:plasma membrane"/>
    <property type="evidence" value="ECO:0007669"/>
    <property type="project" value="UniProtKB-SubCell"/>
</dbReference>
<dbReference type="GO" id="GO:0016410">
    <property type="term" value="F:N-acyltransferase activity"/>
    <property type="evidence" value="ECO:0007669"/>
    <property type="project" value="UniProtKB-UniRule"/>
</dbReference>
<dbReference type="GO" id="GO:0042158">
    <property type="term" value="P:lipoprotein biosynthetic process"/>
    <property type="evidence" value="ECO:0007669"/>
    <property type="project" value="UniProtKB-UniRule"/>
</dbReference>
<dbReference type="CDD" id="cd07571">
    <property type="entry name" value="ALP_N-acyl_transferase"/>
    <property type="match status" value="1"/>
</dbReference>
<dbReference type="Gene3D" id="3.60.110.10">
    <property type="entry name" value="Carbon-nitrogen hydrolase"/>
    <property type="match status" value="1"/>
</dbReference>
<dbReference type="HAMAP" id="MF_01148">
    <property type="entry name" value="Lnt"/>
    <property type="match status" value="1"/>
</dbReference>
<dbReference type="InterPro" id="IPR004563">
    <property type="entry name" value="Apolipo_AcylTrfase"/>
</dbReference>
<dbReference type="InterPro" id="IPR003010">
    <property type="entry name" value="C-N_Hydrolase"/>
</dbReference>
<dbReference type="InterPro" id="IPR036526">
    <property type="entry name" value="C-N_Hydrolase_sf"/>
</dbReference>
<dbReference type="InterPro" id="IPR045378">
    <property type="entry name" value="LNT_N"/>
</dbReference>
<dbReference type="NCBIfam" id="TIGR00546">
    <property type="entry name" value="lnt"/>
    <property type="match status" value="1"/>
</dbReference>
<dbReference type="PANTHER" id="PTHR38686">
    <property type="entry name" value="APOLIPOPROTEIN N-ACYLTRANSFERASE"/>
    <property type="match status" value="1"/>
</dbReference>
<dbReference type="PANTHER" id="PTHR38686:SF1">
    <property type="entry name" value="APOLIPOPROTEIN N-ACYLTRANSFERASE"/>
    <property type="match status" value="1"/>
</dbReference>
<dbReference type="Pfam" id="PF00795">
    <property type="entry name" value="CN_hydrolase"/>
    <property type="match status" value="1"/>
</dbReference>
<dbReference type="Pfam" id="PF20154">
    <property type="entry name" value="LNT_N"/>
    <property type="match status" value="1"/>
</dbReference>
<dbReference type="SUPFAM" id="SSF56317">
    <property type="entry name" value="Carbon-nitrogen hydrolase"/>
    <property type="match status" value="1"/>
</dbReference>
<dbReference type="PROSITE" id="PS50263">
    <property type="entry name" value="CN_HYDROLASE"/>
    <property type="match status" value="1"/>
</dbReference>
<reference key="1">
    <citation type="journal article" date="2004" name="Proc. Natl. Acad. Sci. U.S.A.">
        <title>Comparison of the genome of the oral pathogen Treponema denticola with other spirochete genomes.</title>
        <authorList>
            <person name="Seshadri R."/>
            <person name="Myers G.S.A."/>
            <person name="Tettelin H."/>
            <person name="Eisen J.A."/>
            <person name="Heidelberg J.F."/>
            <person name="Dodson R.J."/>
            <person name="Davidsen T.M."/>
            <person name="DeBoy R.T."/>
            <person name="Fouts D.E."/>
            <person name="Haft D.H."/>
            <person name="Selengut J."/>
            <person name="Ren Q."/>
            <person name="Brinkac L.M."/>
            <person name="Madupu R."/>
            <person name="Kolonay J.F."/>
            <person name="Durkin S.A."/>
            <person name="Daugherty S.C."/>
            <person name="Shetty J."/>
            <person name="Shvartsbeyn A."/>
            <person name="Gebregeorgis E."/>
            <person name="Geer K."/>
            <person name="Tsegaye G."/>
            <person name="Malek J.A."/>
            <person name="Ayodeji B."/>
            <person name="Shatsman S."/>
            <person name="McLeod M.P."/>
            <person name="Smajs D."/>
            <person name="Howell J.K."/>
            <person name="Pal S."/>
            <person name="Amin A."/>
            <person name="Vashisth P."/>
            <person name="McNeill T.Z."/>
            <person name="Xiang Q."/>
            <person name="Sodergren E."/>
            <person name="Baca E."/>
            <person name="Weinstock G.M."/>
            <person name="Norris S.J."/>
            <person name="Fraser C.M."/>
            <person name="Paulsen I.T."/>
        </authorList>
    </citation>
    <scope>NUCLEOTIDE SEQUENCE [LARGE SCALE GENOMIC DNA]</scope>
    <source>
        <strain>ATCC 35405 / DSM 14222 / CIP 103919 / JCM 8153 / KCTC 15104</strain>
    </source>
</reference>
<gene>
    <name evidence="1" type="primary">lnt2</name>
    <name type="ordered locus">TDE_2299</name>
</gene>
<feature type="chain" id="PRO_0000178104" description="Apolipoprotein N-acyltransferase 2">
    <location>
        <begin position="1"/>
        <end position="525"/>
    </location>
</feature>
<feature type="transmembrane region" description="Helical" evidence="1">
    <location>
        <begin position="25"/>
        <end position="45"/>
    </location>
</feature>
<feature type="transmembrane region" description="Helical" evidence="1">
    <location>
        <begin position="56"/>
        <end position="76"/>
    </location>
</feature>
<feature type="transmembrane region" description="Helical" evidence="1">
    <location>
        <begin position="81"/>
        <end position="101"/>
    </location>
</feature>
<feature type="transmembrane region" description="Helical" evidence="1">
    <location>
        <begin position="115"/>
        <end position="135"/>
    </location>
</feature>
<feature type="transmembrane region" description="Helical" evidence="1">
    <location>
        <begin position="153"/>
        <end position="173"/>
    </location>
</feature>
<feature type="transmembrane region" description="Helical" evidence="1">
    <location>
        <begin position="200"/>
        <end position="220"/>
    </location>
</feature>
<feature type="transmembrane region" description="Helical" evidence="1">
    <location>
        <begin position="495"/>
        <end position="515"/>
    </location>
</feature>
<feature type="domain" description="CN hydrolase" evidence="1">
    <location>
        <begin position="228"/>
        <end position="486"/>
    </location>
</feature>
<feature type="active site" description="Proton acceptor" evidence="1">
    <location>
        <position position="274"/>
    </location>
</feature>
<feature type="active site" evidence="1">
    <location>
        <position position="339"/>
    </location>
</feature>
<feature type="active site" description="Nucleophile" evidence="1">
    <location>
        <position position="397"/>
    </location>
</feature>
<organism>
    <name type="scientific">Treponema denticola (strain ATCC 35405 / DSM 14222 / CIP 103919 / JCM 8153 / KCTC 15104)</name>
    <dbReference type="NCBI Taxonomy" id="243275"/>
    <lineage>
        <taxon>Bacteria</taxon>
        <taxon>Pseudomonadati</taxon>
        <taxon>Spirochaetota</taxon>
        <taxon>Spirochaetia</taxon>
        <taxon>Spirochaetales</taxon>
        <taxon>Treponemataceae</taxon>
        <taxon>Treponema</taxon>
    </lineage>
</organism>
<name>LNT2_TREDE</name>
<protein>
    <recommendedName>
        <fullName evidence="1">Apolipoprotein N-acyltransferase 2</fullName>
        <shortName evidence="1">ALP N-acyltransferase 2</shortName>
        <ecNumber evidence="1">2.3.1.269</ecNumber>
    </recommendedName>
</protein>
<comment type="function">
    <text evidence="1">Catalyzes the phospholipid dependent N-acylation of the N-terminal cysteine of apolipoprotein, the last step in lipoprotein maturation.</text>
</comment>
<comment type="catalytic activity">
    <reaction evidence="1">
        <text>N-terminal S-1,2-diacyl-sn-glyceryl-L-cysteinyl-[lipoprotein] + a glycerophospholipid = N-acyl-S-1,2-diacyl-sn-glyceryl-L-cysteinyl-[lipoprotein] + a 2-acyl-sn-glycero-3-phospholipid + H(+)</text>
        <dbReference type="Rhea" id="RHEA:48228"/>
        <dbReference type="Rhea" id="RHEA-COMP:14681"/>
        <dbReference type="Rhea" id="RHEA-COMP:14684"/>
        <dbReference type="ChEBI" id="CHEBI:15378"/>
        <dbReference type="ChEBI" id="CHEBI:136912"/>
        <dbReference type="ChEBI" id="CHEBI:140656"/>
        <dbReference type="ChEBI" id="CHEBI:140657"/>
        <dbReference type="ChEBI" id="CHEBI:140660"/>
        <dbReference type="EC" id="2.3.1.269"/>
    </reaction>
</comment>
<comment type="pathway">
    <text evidence="1">Protein modification; lipoprotein biosynthesis (N-acyl transfer).</text>
</comment>
<comment type="subcellular location">
    <subcellularLocation>
        <location evidence="1">Cell inner membrane</location>
        <topology evidence="1">Multi-pass membrane protein</topology>
    </subcellularLocation>
</comment>
<comment type="similarity">
    <text evidence="1">Belongs to the CN hydrolase family. Apolipoprotein N-acyltransferase subfamily.</text>
</comment>
<evidence type="ECO:0000255" key="1">
    <source>
        <dbReference type="HAMAP-Rule" id="MF_01148"/>
    </source>
</evidence>
<keyword id="KW-0012">Acyltransferase</keyword>
<keyword id="KW-0997">Cell inner membrane</keyword>
<keyword id="KW-1003">Cell membrane</keyword>
<keyword id="KW-0472">Membrane</keyword>
<keyword id="KW-1185">Reference proteome</keyword>
<keyword id="KW-0808">Transferase</keyword>
<keyword id="KW-0812">Transmembrane</keyword>
<keyword id="KW-1133">Transmembrane helix</keyword>
<sequence length="525" mass="59649">MRFFLSFFIIFISSVLFSFGIPNEILNFGSAIAGFSGLVLVYYALLNCGSHKRAAFLYGFFVSFVHLMSSFWLAFFEDFAIFTLGASTLAYFFIAMPFGFLLYHSLQKRENLRPFFFAAIWLLWEFAKSTGFLAYPWGTAPMICFNLKPFIQFVDITGVWGLSFIVPLIAACLGEALQTYAYSANSKAFFKGLTEIKSPLIFTAFLVLIINIYGITILSIEMKPATFLNTVIVQQNTDPWDNSQFEENIKTSQALSRKAIFSANKKPDLIVWSESSLIVPYKDNEDFYGILPYDDPFTRFLADTDTPIIVGSPYIDGKKQYNAAYLLSPEGKILDIYSKIQLVPFAEYIPFIDNPLVVRFFDKLVGFSSGWNPGTEYKVFGIKNSEGKTVNFTVPICFEDAFPAVCLNLHNAGSEVLINITNDSWSKTKSAEYQHFVVAHFRAIELRTTLVRSTNSGYSVVVDPKGKIISDMPLFEAESVYTEVPVYGHKKTFYASYKDWLPIMMFLILIFNIFLEKRRAKTARF</sequence>